<accession>Q8ZYE5</accession>
<dbReference type="EC" id="4.1.99.22" evidence="1"/>
<dbReference type="EMBL" id="AE009441">
    <property type="protein sequence ID" value="AAL63048.1"/>
    <property type="molecule type" value="Genomic_DNA"/>
</dbReference>
<dbReference type="RefSeq" id="WP_011007520.1">
    <property type="nucleotide sequence ID" value="NC_003364.1"/>
</dbReference>
<dbReference type="SMR" id="Q8ZYE5"/>
<dbReference type="FunCoup" id="Q8ZYE5">
    <property type="interactions" value="133"/>
</dbReference>
<dbReference type="STRING" id="178306.PAE0814"/>
<dbReference type="EnsemblBacteria" id="AAL63048">
    <property type="protein sequence ID" value="AAL63048"/>
    <property type="gene ID" value="PAE0814"/>
</dbReference>
<dbReference type="GeneID" id="1465277"/>
<dbReference type="KEGG" id="pai:PAE0814"/>
<dbReference type="PATRIC" id="fig|178306.9.peg.597"/>
<dbReference type="eggNOG" id="arCOG00930">
    <property type="taxonomic scope" value="Archaea"/>
</dbReference>
<dbReference type="HOGENOM" id="CLU_009273_0_1_2"/>
<dbReference type="InParanoid" id="Q8ZYE5"/>
<dbReference type="UniPathway" id="UPA00344"/>
<dbReference type="Proteomes" id="UP000002439">
    <property type="component" value="Chromosome"/>
</dbReference>
<dbReference type="GO" id="GO:0051539">
    <property type="term" value="F:4 iron, 4 sulfur cluster binding"/>
    <property type="evidence" value="ECO:0007669"/>
    <property type="project" value="UniProtKB-UniRule"/>
</dbReference>
<dbReference type="GO" id="GO:0061799">
    <property type="term" value="F:cyclic pyranopterin monophosphate synthase activity"/>
    <property type="evidence" value="ECO:0000318"/>
    <property type="project" value="GO_Central"/>
</dbReference>
<dbReference type="GO" id="GO:0061798">
    <property type="term" value="F:GTP 3',8'-cyclase activity"/>
    <property type="evidence" value="ECO:0000318"/>
    <property type="project" value="GO_Central"/>
</dbReference>
<dbReference type="GO" id="GO:0005525">
    <property type="term" value="F:GTP binding"/>
    <property type="evidence" value="ECO:0007669"/>
    <property type="project" value="UniProtKB-UniRule"/>
</dbReference>
<dbReference type="GO" id="GO:0046872">
    <property type="term" value="F:metal ion binding"/>
    <property type="evidence" value="ECO:0007669"/>
    <property type="project" value="UniProtKB-KW"/>
</dbReference>
<dbReference type="GO" id="GO:1904047">
    <property type="term" value="F:S-adenosyl-L-methionine binding"/>
    <property type="evidence" value="ECO:0007669"/>
    <property type="project" value="UniProtKB-UniRule"/>
</dbReference>
<dbReference type="GO" id="GO:0006777">
    <property type="term" value="P:Mo-molybdopterin cofactor biosynthetic process"/>
    <property type="evidence" value="ECO:0000318"/>
    <property type="project" value="GO_Central"/>
</dbReference>
<dbReference type="CDD" id="cd01335">
    <property type="entry name" value="Radical_SAM"/>
    <property type="match status" value="1"/>
</dbReference>
<dbReference type="CDD" id="cd21117">
    <property type="entry name" value="Twitch_MoaA"/>
    <property type="match status" value="1"/>
</dbReference>
<dbReference type="Gene3D" id="3.20.20.70">
    <property type="entry name" value="Aldolase class I"/>
    <property type="match status" value="1"/>
</dbReference>
<dbReference type="HAMAP" id="MF_01225_A">
    <property type="entry name" value="MoaA_A"/>
    <property type="match status" value="1"/>
</dbReference>
<dbReference type="InterPro" id="IPR013785">
    <property type="entry name" value="Aldolase_TIM"/>
</dbReference>
<dbReference type="InterPro" id="IPR006638">
    <property type="entry name" value="Elp3/MiaA/NifB-like_rSAM"/>
</dbReference>
<dbReference type="InterPro" id="IPR013485">
    <property type="entry name" value="MoaA_arc"/>
</dbReference>
<dbReference type="InterPro" id="IPR010505">
    <property type="entry name" value="MoaA_twitch"/>
</dbReference>
<dbReference type="InterPro" id="IPR050105">
    <property type="entry name" value="MoCo_biosynth_MoaA/MoaC"/>
</dbReference>
<dbReference type="InterPro" id="IPR007197">
    <property type="entry name" value="rSAM"/>
</dbReference>
<dbReference type="NCBIfam" id="TIGR02668">
    <property type="entry name" value="moaA_archaeal"/>
    <property type="match status" value="1"/>
</dbReference>
<dbReference type="NCBIfam" id="NF001199">
    <property type="entry name" value="PRK00164.2-1"/>
    <property type="match status" value="1"/>
</dbReference>
<dbReference type="PANTHER" id="PTHR22960:SF0">
    <property type="entry name" value="MOLYBDENUM COFACTOR BIOSYNTHESIS PROTEIN 1"/>
    <property type="match status" value="1"/>
</dbReference>
<dbReference type="PANTHER" id="PTHR22960">
    <property type="entry name" value="MOLYBDOPTERIN COFACTOR SYNTHESIS PROTEIN A"/>
    <property type="match status" value="1"/>
</dbReference>
<dbReference type="Pfam" id="PF06463">
    <property type="entry name" value="Mob_synth_C"/>
    <property type="match status" value="1"/>
</dbReference>
<dbReference type="Pfam" id="PF04055">
    <property type="entry name" value="Radical_SAM"/>
    <property type="match status" value="1"/>
</dbReference>
<dbReference type="SFLD" id="SFLDG01383">
    <property type="entry name" value="cyclic_pyranopterin_phosphate"/>
    <property type="match status" value="1"/>
</dbReference>
<dbReference type="SFLD" id="SFLDG01072">
    <property type="entry name" value="dehydrogenase_like"/>
    <property type="match status" value="1"/>
</dbReference>
<dbReference type="SMART" id="SM00729">
    <property type="entry name" value="Elp3"/>
    <property type="match status" value="1"/>
</dbReference>
<dbReference type="SUPFAM" id="SSF102114">
    <property type="entry name" value="Radical SAM enzymes"/>
    <property type="match status" value="1"/>
</dbReference>
<dbReference type="PROSITE" id="PS51918">
    <property type="entry name" value="RADICAL_SAM"/>
    <property type="match status" value="1"/>
</dbReference>
<comment type="function">
    <text evidence="1">Catalyzes the cyclization of GTP to (8S)-3',8-cyclo-7,8-dihydroguanosine 5'-triphosphate.</text>
</comment>
<comment type="catalytic activity">
    <reaction evidence="1">
        <text>GTP + AH2 + S-adenosyl-L-methionine = (8S)-3',8-cyclo-7,8-dihydroguanosine 5'-triphosphate + 5'-deoxyadenosine + L-methionine + A + H(+)</text>
        <dbReference type="Rhea" id="RHEA:49576"/>
        <dbReference type="ChEBI" id="CHEBI:13193"/>
        <dbReference type="ChEBI" id="CHEBI:15378"/>
        <dbReference type="ChEBI" id="CHEBI:17319"/>
        <dbReference type="ChEBI" id="CHEBI:17499"/>
        <dbReference type="ChEBI" id="CHEBI:37565"/>
        <dbReference type="ChEBI" id="CHEBI:57844"/>
        <dbReference type="ChEBI" id="CHEBI:59789"/>
        <dbReference type="ChEBI" id="CHEBI:131766"/>
        <dbReference type="EC" id="4.1.99.22"/>
    </reaction>
</comment>
<comment type="cofactor">
    <cofactor evidence="1">
        <name>[4Fe-4S] cluster</name>
        <dbReference type="ChEBI" id="CHEBI:49883"/>
    </cofactor>
    <text evidence="1">Binds 2 [4Fe-4S] clusters. Binds 1 [4Fe-4S] cluster coordinated with 3 cysteines and an exchangeable S-adenosyl-L-methionine and 1 [4Fe-4S] cluster coordinated with 3 cysteines and the GTP-derived substrate.</text>
</comment>
<comment type="pathway">
    <text evidence="1">Cofactor biosynthesis; molybdopterin biosynthesis.</text>
</comment>
<comment type="similarity">
    <text evidence="1">Belongs to the radical SAM superfamily. MoaA family.</text>
</comment>
<name>MOAA_PYRAE</name>
<sequence length="310" mass="34472">MLFDKYGRSLQKLRYVVNDECNYNCVFCHFEGQSRRQGRYLTAEDYGFVTSVFKSLGVADFKITGGEPLLRGDIDLIVANIAKTGAYVTLTTNGYLLRKWVRKLQAAGLKRANVSIHTTDPEKYSKITGVPPSAFREVLRGLTEARDVGISLKLNAVVLRGINTDRDSVKNLVKLAASLGAALQFIELMPSGWGASVFNELYEPIETLVNIIFELGGRPAGVRKELHNRPLYNIAGVTVELIKNFSNPTFCSGCTTMRLTSDGKLKTCIYADSSVDLMPYIKSRDVEGLLYAVRTALARREPRFKLYSSS</sequence>
<gene>
    <name evidence="1" type="primary">moaA</name>
    <name type="ordered locus">PAE0814</name>
</gene>
<reference key="1">
    <citation type="journal article" date="2002" name="Proc. Natl. Acad. Sci. U.S.A.">
        <title>Genome sequence of the hyperthermophilic crenarchaeon Pyrobaculum aerophilum.</title>
        <authorList>
            <person name="Fitz-Gibbon S.T."/>
            <person name="Ladner H."/>
            <person name="Kim U.-J."/>
            <person name="Stetter K.O."/>
            <person name="Simon M.I."/>
            <person name="Miller J.H."/>
        </authorList>
    </citation>
    <scope>NUCLEOTIDE SEQUENCE [LARGE SCALE GENOMIC DNA]</scope>
    <source>
        <strain>ATCC 51768 / DSM 7523 / JCM 9630 / CIP 104966 / NBRC 100827 / IM2</strain>
    </source>
</reference>
<proteinExistence type="inferred from homology"/>
<protein>
    <recommendedName>
        <fullName evidence="1">Probable GTP 3',8-cyclase</fullName>
        <ecNumber evidence="1">4.1.99.22</ecNumber>
    </recommendedName>
    <alternativeName>
        <fullName evidence="1">Molybdenum cofactor biosynthesis protein A</fullName>
    </alternativeName>
</protein>
<feature type="chain" id="PRO_0000153023" description="Probable GTP 3',8-cyclase">
    <location>
        <begin position="1"/>
        <end position="310"/>
    </location>
</feature>
<feature type="domain" description="Radical SAM core" evidence="2">
    <location>
        <begin position="5"/>
        <end position="218"/>
    </location>
</feature>
<feature type="binding site" evidence="1">
    <location>
        <position position="14"/>
    </location>
    <ligand>
        <name>GTP</name>
        <dbReference type="ChEBI" id="CHEBI:37565"/>
    </ligand>
</feature>
<feature type="binding site" evidence="1">
    <location>
        <position position="21"/>
    </location>
    <ligand>
        <name>[4Fe-4S] cluster</name>
        <dbReference type="ChEBI" id="CHEBI:49883"/>
        <label>1</label>
        <note>4Fe-4S-S-AdoMet</note>
    </ligand>
</feature>
<feature type="binding site" evidence="1">
    <location>
        <position position="25"/>
    </location>
    <ligand>
        <name>[4Fe-4S] cluster</name>
        <dbReference type="ChEBI" id="CHEBI:49883"/>
        <label>1</label>
        <note>4Fe-4S-S-AdoMet</note>
    </ligand>
</feature>
<feature type="binding site" evidence="1">
    <location>
        <position position="28"/>
    </location>
    <ligand>
        <name>[4Fe-4S] cluster</name>
        <dbReference type="ChEBI" id="CHEBI:49883"/>
        <label>1</label>
        <note>4Fe-4S-S-AdoMet</note>
    </ligand>
</feature>
<feature type="binding site" evidence="1">
    <location>
        <position position="62"/>
    </location>
    <ligand>
        <name>GTP</name>
        <dbReference type="ChEBI" id="CHEBI:37565"/>
    </ligand>
</feature>
<feature type="binding site" evidence="1">
    <location>
        <position position="66"/>
    </location>
    <ligand>
        <name>S-adenosyl-L-methionine</name>
        <dbReference type="ChEBI" id="CHEBI:59789"/>
    </ligand>
</feature>
<feature type="binding site" evidence="1">
    <location>
        <position position="91"/>
    </location>
    <ligand>
        <name>GTP</name>
        <dbReference type="ChEBI" id="CHEBI:37565"/>
    </ligand>
</feature>
<feature type="binding site" evidence="1">
    <location>
        <position position="115"/>
    </location>
    <ligand>
        <name>S-adenosyl-L-methionine</name>
        <dbReference type="ChEBI" id="CHEBI:59789"/>
    </ligand>
</feature>
<feature type="binding site" evidence="1">
    <location>
        <position position="153"/>
    </location>
    <ligand>
        <name>GTP</name>
        <dbReference type="ChEBI" id="CHEBI:37565"/>
    </ligand>
</feature>
<feature type="binding site" evidence="1">
    <location>
        <position position="251"/>
    </location>
    <ligand>
        <name>[4Fe-4S] cluster</name>
        <dbReference type="ChEBI" id="CHEBI:49883"/>
        <label>2</label>
        <note>4Fe-4S-substrate</note>
    </ligand>
</feature>
<feature type="binding site" evidence="1">
    <location>
        <position position="254"/>
    </location>
    <ligand>
        <name>[4Fe-4S] cluster</name>
        <dbReference type="ChEBI" id="CHEBI:49883"/>
        <label>2</label>
        <note>4Fe-4S-substrate</note>
    </ligand>
</feature>
<feature type="binding site" evidence="1">
    <location>
        <position position="268"/>
    </location>
    <ligand>
        <name>[4Fe-4S] cluster</name>
        <dbReference type="ChEBI" id="CHEBI:49883"/>
        <label>2</label>
        <note>4Fe-4S-substrate</note>
    </ligand>
</feature>
<keyword id="KW-0004">4Fe-4S</keyword>
<keyword id="KW-0342">GTP-binding</keyword>
<keyword id="KW-0408">Iron</keyword>
<keyword id="KW-0411">Iron-sulfur</keyword>
<keyword id="KW-0456">Lyase</keyword>
<keyword id="KW-0479">Metal-binding</keyword>
<keyword id="KW-0501">Molybdenum cofactor biosynthesis</keyword>
<keyword id="KW-0547">Nucleotide-binding</keyword>
<keyword id="KW-1185">Reference proteome</keyword>
<keyword id="KW-0949">S-adenosyl-L-methionine</keyword>
<evidence type="ECO:0000255" key="1">
    <source>
        <dbReference type="HAMAP-Rule" id="MF_01225"/>
    </source>
</evidence>
<evidence type="ECO:0000255" key="2">
    <source>
        <dbReference type="PROSITE-ProRule" id="PRU01266"/>
    </source>
</evidence>
<organism>
    <name type="scientific">Pyrobaculum aerophilum (strain ATCC 51768 / DSM 7523 / JCM 9630 / CIP 104966 / NBRC 100827 / IM2)</name>
    <dbReference type="NCBI Taxonomy" id="178306"/>
    <lineage>
        <taxon>Archaea</taxon>
        <taxon>Thermoproteota</taxon>
        <taxon>Thermoprotei</taxon>
        <taxon>Thermoproteales</taxon>
        <taxon>Thermoproteaceae</taxon>
        <taxon>Pyrobaculum</taxon>
    </lineage>
</organism>